<organism>
    <name type="scientific">Latilactobacillus sakei subsp. sakei (strain 23K)</name>
    <name type="common">Lactobacillus sakei subsp. sakei</name>
    <dbReference type="NCBI Taxonomy" id="314315"/>
    <lineage>
        <taxon>Bacteria</taxon>
        <taxon>Bacillati</taxon>
        <taxon>Bacillota</taxon>
        <taxon>Bacilli</taxon>
        <taxon>Lactobacillales</taxon>
        <taxon>Lactobacillaceae</taxon>
        <taxon>Latilactobacillus</taxon>
    </lineage>
</organism>
<evidence type="ECO:0000255" key="1">
    <source>
        <dbReference type="HAMAP-Rule" id="MF_00252"/>
    </source>
</evidence>
<reference key="1">
    <citation type="journal article" date="2005" name="Nat. Biotechnol.">
        <title>The complete genome sequence of the meat-borne lactic acid bacterium Lactobacillus sakei 23K.</title>
        <authorList>
            <person name="Chaillou S."/>
            <person name="Champomier-Verges M.-C."/>
            <person name="Cornet M."/>
            <person name="Crutz-Le Coq A.-M."/>
            <person name="Dudez A.-M."/>
            <person name="Martin V."/>
            <person name="Beaufils S."/>
            <person name="Darbon-Rongere E."/>
            <person name="Bossy R."/>
            <person name="Loux V."/>
            <person name="Zagorec M."/>
        </authorList>
    </citation>
    <scope>NUCLEOTIDE SEQUENCE [LARGE SCALE GENOMIC DNA]</scope>
    <source>
        <strain>23K</strain>
    </source>
</reference>
<proteinExistence type="inferred from homology"/>
<keyword id="KW-0030">Aminoacyl-tRNA synthetase</keyword>
<keyword id="KW-0067">ATP-binding</keyword>
<keyword id="KW-0963">Cytoplasm</keyword>
<keyword id="KW-0436">Ligase</keyword>
<keyword id="KW-0460">Magnesium</keyword>
<keyword id="KW-0479">Metal-binding</keyword>
<keyword id="KW-0547">Nucleotide-binding</keyword>
<keyword id="KW-0648">Protein biosynthesis</keyword>
<keyword id="KW-1185">Reference proteome</keyword>
<sequence>MAQKDNQKEMNDQLKVRREKMQFLKDEGIDPFGSRFERTHLAAALHEEFEAIEKDDLDVKNQEVTIAGRMMSKRGKGKVGFADIRDRSGKIQIYVRKDEVGEDNYKIFKKADLGDHLGITGQIMKTDMGELTVKATHLTFLSKALRPLPDKYHGLTNVEQIYRQRYLDLIANPESMDRFTKRSKIISAVREYLDTHDFTEVETPVLHGQAGGASARPFITHHNALDINLYLRIALELHLKRLIVGGMERVYEIGRVFRNEGIDTKHNPEFTMLETYAAYFDYKDVMDETEGIIRFAAHKVLGTGQISYQGQAIDLDSDFARVHMVDAIKAETGVDFWQPMTVESARELADQHHVKYEEYWQVGHIINAFFEEFVEDTLVQPTFIYGHPVEISPLAKKNAEDDRFTDRWELFMHGNEYANAFTELNDPIDQRERFEAQAKERENGNDEAEGIDEDYVEALEYGMPPTGGLGIGIDRLVMLLTDAASIRDVLLFPTMRPDKQENEEI</sequence>
<name>SYK_LATSS</name>
<feature type="chain" id="PRO_1000204567" description="Lysine--tRNA ligase">
    <location>
        <begin position="1"/>
        <end position="505"/>
    </location>
</feature>
<feature type="binding site" evidence="1">
    <location>
        <position position="409"/>
    </location>
    <ligand>
        <name>Mg(2+)</name>
        <dbReference type="ChEBI" id="CHEBI:18420"/>
        <label>1</label>
    </ligand>
</feature>
<feature type="binding site" evidence="1">
    <location>
        <position position="416"/>
    </location>
    <ligand>
        <name>Mg(2+)</name>
        <dbReference type="ChEBI" id="CHEBI:18420"/>
        <label>1</label>
    </ligand>
</feature>
<feature type="binding site" evidence="1">
    <location>
        <position position="416"/>
    </location>
    <ligand>
        <name>Mg(2+)</name>
        <dbReference type="ChEBI" id="CHEBI:18420"/>
        <label>2</label>
    </ligand>
</feature>
<dbReference type="EC" id="6.1.1.6" evidence="1"/>
<dbReference type="EMBL" id="CR936503">
    <property type="protein sequence ID" value="CAI55901.1"/>
    <property type="molecule type" value="Genomic_DNA"/>
</dbReference>
<dbReference type="SMR" id="Q38V83"/>
<dbReference type="STRING" id="314315.LCA_1594"/>
<dbReference type="KEGG" id="lsa:LCA_1594"/>
<dbReference type="eggNOG" id="COG1190">
    <property type="taxonomic scope" value="Bacteria"/>
</dbReference>
<dbReference type="HOGENOM" id="CLU_008255_6_0_9"/>
<dbReference type="Proteomes" id="UP000002707">
    <property type="component" value="Chromosome"/>
</dbReference>
<dbReference type="GO" id="GO:0005829">
    <property type="term" value="C:cytosol"/>
    <property type="evidence" value="ECO:0007669"/>
    <property type="project" value="TreeGrafter"/>
</dbReference>
<dbReference type="GO" id="GO:0005524">
    <property type="term" value="F:ATP binding"/>
    <property type="evidence" value="ECO:0007669"/>
    <property type="project" value="UniProtKB-UniRule"/>
</dbReference>
<dbReference type="GO" id="GO:0140096">
    <property type="term" value="F:catalytic activity, acting on a protein"/>
    <property type="evidence" value="ECO:0007669"/>
    <property type="project" value="UniProtKB-ARBA"/>
</dbReference>
<dbReference type="GO" id="GO:0004824">
    <property type="term" value="F:lysine-tRNA ligase activity"/>
    <property type="evidence" value="ECO:0007669"/>
    <property type="project" value="UniProtKB-UniRule"/>
</dbReference>
<dbReference type="GO" id="GO:0000287">
    <property type="term" value="F:magnesium ion binding"/>
    <property type="evidence" value="ECO:0007669"/>
    <property type="project" value="UniProtKB-UniRule"/>
</dbReference>
<dbReference type="GO" id="GO:0016740">
    <property type="term" value="F:transferase activity"/>
    <property type="evidence" value="ECO:0007669"/>
    <property type="project" value="UniProtKB-ARBA"/>
</dbReference>
<dbReference type="GO" id="GO:0000049">
    <property type="term" value="F:tRNA binding"/>
    <property type="evidence" value="ECO:0007669"/>
    <property type="project" value="TreeGrafter"/>
</dbReference>
<dbReference type="GO" id="GO:0006430">
    <property type="term" value="P:lysyl-tRNA aminoacylation"/>
    <property type="evidence" value="ECO:0007669"/>
    <property type="project" value="UniProtKB-UniRule"/>
</dbReference>
<dbReference type="CDD" id="cd00775">
    <property type="entry name" value="LysRS_core"/>
    <property type="match status" value="1"/>
</dbReference>
<dbReference type="CDD" id="cd04322">
    <property type="entry name" value="LysRS_N"/>
    <property type="match status" value="1"/>
</dbReference>
<dbReference type="FunFam" id="2.40.50.140:FF:000024">
    <property type="entry name" value="Lysine--tRNA ligase"/>
    <property type="match status" value="1"/>
</dbReference>
<dbReference type="FunFam" id="3.30.930.10:FF:000001">
    <property type="entry name" value="Lysine--tRNA ligase"/>
    <property type="match status" value="1"/>
</dbReference>
<dbReference type="Gene3D" id="3.30.930.10">
    <property type="entry name" value="Bira Bifunctional Protein, Domain 2"/>
    <property type="match status" value="1"/>
</dbReference>
<dbReference type="Gene3D" id="2.40.50.140">
    <property type="entry name" value="Nucleic acid-binding proteins"/>
    <property type="match status" value="1"/>
</dbReference>
<dbReference type="HAMAP" id="MF_00252">
    <property type="entry name" value="Lys_tRNA_synth_class2"/>
    <property type="match status" value="1"/>
</dbReference>
<dbReference type="InterPro" id="IPR004364">
    <property type="entry name" value="Aa-tRNA-synt_II"/>
</dbReference>
<dbReference type="InterPro" id="IPR006195">
    <property type="entry name" value="aa-tRNA-synth_II"/>
</dbReference>
<dbReference type="InterPro" id="IPR045864">
    <property type="entry name" value="aa-tRNA-synth_II/BPL/LPL"/>
</dbReference>
<dbReference type="InterPro" id="IPR002313">
    <property type="entry name" value="Lys-tRNA-ligase_II"/>
</dbReference>
<dbReference type="InterPro" id="IPR034762">
    <property type="entry name" value="Lys-tRNA-ligase_II_bac/euk"/>
</dbReference>
<dbReference type="InterPro" id="IPR044136">
    <property type="entry name" value="Lys-tRNA-ligase_II_N"/>
</dbReference>
<dbReference type="InterPro" id="IPR018149">
    <property type="entry name" value="Lys-tRNA-synth_II_C"/>
</dbReference>
<dbReference type="InterPro" id="IPR012340">
    <property type="entry name" value="NA-bd_OB-fold"/>
</dbReference>
<dbReference type="InterPro" id="IPR004365">
    <property type="entry name" value="NA-bd_OB_tRNA"/>
</dbReference>
<dbReference type="NCBIfam" id="TIGR00499">
    <property type="entry name" value="lysS_bact"/>
    <property type="match status" value="1"/>
</dbReference>
<dbReference type="NCBIfam" id="NF001756">
    <property type="entry name" value="PRK00484.1"/>
    <property type="match status" value="1"/>
</dbReference>
<dbReference type="PANTHER" id="PTHR42918:SF15">
    <property type="entry name" value="LYSINE--TRNA LIGASE, CHLOROPLASTIC_MITOCHONDRIAL"/>
    <property type="match status" value="1"/>
</dbReference>
<dbReference type="PANTHER" id="PTHR42918">
    <property type="entry name" value="LYSYL-TRNA SYNTHETASE"/>
    <property type="match status" value="1"/>
</dbReference>
<dbReference type="Pfam" id="PF00152">
    <property type="entry name" value="tRNA-synt_2"/>
    <property type="match status" value="1"/>
</dbReference>
<dbReference type="Pfam" id="PF01336">
    <property type="entry name" value="tRNA_anti-codon"/>
    <property type="match status" value="1"/>
</dbReference>
<dbReference type="PIRSF" id="PIRSF039101">
    <property type="entry name" value="LysRS2"/>
    <property type="match status" value="1"/>
</dbReference>
<dbReference type="PRINTS" id="PR00982">
    <property type="entry name" value="TRNASYNTHLYS"/>
</dbReference>
<dbReference type="SUPFAM" id="SSF55681">
    <property type="entry name" value="Class II aaRS and biotin synthetases"/>
    <property type="match status" value="1"/>
</dbReference>
<dbReference type="SUPFAM" id="SSF50249">
    <property type="entry name" value="Nucleic acid-binding proteins"/>
    <property type="match status" value="1"/>
</dbReference>
<dbReference type="PROSITE" id="PS50862">
    <property type="entry name" value="AA_TRNA_LIGASE_II"/>
    <property type="match status" value="1"/>
</dbReference>
<protein>
    <recommendedName>
        <fullName evidence="1">Lysine--tRNA ligase</fullName>
        <ecNumber evidence="1">6.1.1.6</ecNumber>
    </recommendedName>
    <alternativeName>
        <fullName evidence="1">Lysyl-tRNA synthetase</fullName>
        <shortName evidence="1">LysRS</shortName>
    </alternativeName>
</protein>
<accession>Q38V83</accession>
<comment type="catalytic activity">
    <reaction evidence="1">
        <text>tRNA(Lys) + L-lysine + ATP = L-lysyl-tRNA(Lys) + AMP + diphosphate</text>
        <dbReference type="Rhea" id="RHEA:20792"/>
        <dbReference type="Rhea" id="RHEA-COMP:9696"/>
        <dbReference type="Rhea" id="RHEA-COMP:9697"/>
        <dbReference type="ChEBI" id="CHEBI:30616"/>
        <dbReference type="ChEBI" id="CHEBI:32551"/>
        <dbReference type="ChEBI" id="CHEBI:33019"/>
        <dbReference type="ChEBI" id="CHEBI:78442"/>
        <dbReference type="ChEBI" id="CHEBI:78529"/>
        <dbReference type="ChEBI" id="CHEBI:456215"/>
        <dbReference type="EC" id="6.1.1.6"/>
    </reaction>
</comment>
<comment type="cofactor">
    <cofactor evidence="1">
        <name>Mg(2+)</name>
        <dbReference type="ChEBI" id="CHEBI:18420"/>
    </cofactor>
    <text evidence="1">Binds 3 Mg(2+) ions per subunit.</text>
</comment>
<comment type="subunit">
    <text evidence="1">Homodimer.</text>
</comment>
<comment type="subcellular location">
    <subcellularLocation>
        <location evidence="1">Cytoplasm</location>
    </subcellularLocation>
</comment>
<comment type="similarity">
    <text evidence="1">Belongs to the class-II aminoacyl-tRNA synthetase family.</text>
</comment>
<gene>
    <name evidence="1" type="primary">lysS</name>
    <name type="ordered locus">LCA_1594</name>
</gene>